<reference key="1">
    <citation type="journal article" date="2009" name="J. Bacteriol.">
        <title>Complete genome sequence and comparative genome analysis of enteropathogenic Escherichia coli O127:H6 strain E2348/69.</title>
        <authorList>
            <person name="Iguchi A."/>
            <person name="Thomson N.R."/>
            <person name="Ogura Y."/>
            <person name="Saunders D."/>
            <person name="Ooka T."/>
            <person name="Henderson I.R."/>
            <person name="Harris D."/>
            <person name="Asadulghani M."/>
            <person name="Kurokawa K."/>
            <person name="Dean P."/>
            <person name="Kenny B."/>
            <person name="Quail M.A."/>
            <person name="Thurston S."/>
            <person name="Dougan G."/>
            <person name="Hayashi T."/>
            <person name="Parkhill J."/>
            <person name="Frankel G."/>
        </authorList>
    </citation>
    <scope>NUCLEOTIDE SEQUENCE [LARGE SCALE GENOMIC DNA]</scope>
    <source>
        <strain>E2348/69 / EPEC</strain>
    </source>
</reference>
<evidence type="ECO:0000255" key="1">
    <source>
        <dbReference type="HAMAP-Rule" id="MF_00719"/>
    </source>
</evidence>
<feature type="chain" id="PRO_1000148021" description="Adenosylcobinamide-GDP ribazoletransferase">
    <location>
        <begin position="1"/>
        <end position="247"/>
    </location>
</feature>
<feature type="transmembrane region" description="Helical" evidence="1">
    <location>
        <begin position="34"/>
        <end position="54"/>
    </location>
</feature>
<feature type="transmembrane region" description="Helical" evidence="1">
    <location>
        <begin position="59"/>
        <end position="79"/>
    </location>
</feature>
<feature type="transmembrane region" description="Helical" evidence="1">
    <location>
        <begin position="113"/>
        <end position="133"/>
    </location>
</feature>
<feature type="transmembrane region" description="Helical" evidence="1">
    <location>
        <begin position="138"/>
        <end position="158"/>
    </location>
</feature>
<feature type="transmembrane region" description="Helical" evidence="1">
    <location>
        <begin position="194"/>
        <end position="214"/>
    </location>
</feature>
<organism>
    <name type="scientific">Escherichia coli O127:H6 (strain E2348/69 / EPEC)</name>
    <dbReference type="NCBI Taxonomy" id="574521"/>
    <lineage>
        <taxon>Bacteria</taxon>
        <taxon>Pseudomonadati</taxon>
        <taxon>Pseudomonadota</taxon>
        <taxon>Gammaproteobacteria</taxon>
        <taxon>Enterobacterales</taxon>
        <taxon>Enterobacteriaceae</taxon>
        <taxon>Escherichia</taxon>
    </lineage>
</organism>
<accession>B7UT21</accession>
<comment type="function">
    <text evidence="1">Joins adenosylcobinamide-GDP and alpha-ribazole to generate adenosylcobalamin (Ado-cobalamin). Also synthesizes adenosylcobalamin 5'-phosphate from adenosylcobinamide-GDP and alpha-ribazole 5'-phosphate.</text>
</comment>
<comment type="catalytic activity">
    <reaction evidence="1">
        <text>alpha-ribazole + adenosylcob(III)inamide-GDP = adenosylcob(III)alamin + GMP + H(+)</text>
        <dbReference type="Rhea" id="RHEA:16049"/>
        <dbReference type="ChEBI" id="CHEBI:10329"/>
        <dbReference type="ChEBI" id="CHEBI:15378"/>
        <dbReference type="ChEBI" id="CHEBI:18408"/>
        <dbReference type="ChEBI" id="CHEBI:58115"/>
        <dbReference type="ChEBI" id="CHEBI:60487"/>
        <dbReference type="EC" id="2.7.8.26"/>
    </reaction>
</comment>
<comment type="catalytic activity">
    <reaction evidence="1">
        <text>alpha-ribazole 5'-phosphate + adenosylcob(III)inamide-GDP = adenosylcob(III)alamin 5'-phosphate + GMP + H(+)</text>
        <dbReference type="Rhea" id="RHEA:23560"/>
        <dbReference type="ChEBI" id="CHEBI:15378"/>
        <dbReference type="ChEBI" id="CHEBI:57918"/>
        <dbReference type="ChEBI" id="CHEBI:58115"/>
        <dbReference type="ChEBI" id="CHEBI:60487"/>
        <dbReference type="ChEBI" id="CHEBI:60493"/>
        <dbReference type="EC" id="2.7.8.26"/>
    </reaction>
</comment>
<comment type="cofactor">
    <cofactor evidence="1">
        <name>Mg(2+)</name>
        <dbReference type="ChEBI" id="CHEBI:18420"/>
    </cofactor>
</comment>
<comment type="pathway">
    <text evidence="1">Cofactor biosynthesis; adenosylcobalamin biosynthesis; adenosylcobalamin from cob(II)yrinate a,c-diamide: step 7/7.</text>
</comment>
<comment type="subcellular location">
    <subcellularLocation>
        <location evidence="1">Cell inner membrane</location>
        <topology evidence="1">Multi-pass membrane protein</topology>
    </subcellularLocation>
</comment>
<comment type="similarity">
    <text evidence="1">Belongs to the CobS family.</text>
</comment>
<sequence length="247" mass="26426">MSKLFWAMLSFITRLPVPRRWSQGLDFEHYSRGIITFPLIGLLLGAISGLVFMVLQAWCGVPLAALFSVLVLALMTGGFHLDGLADTCDGVFSARSRDRMLEIMRDSRLGTHGGLALIFVVLAKILVLSELTLRGEPILASLAAACAVSRGTAALLMYRHRYAREEGLGNVFIGKIDGRQTCVTLGLAAIFAAVLLPGMHGVAAMVVTMVAIFILGQLLKRTLGGQTGDTLGAAIELGELVFLLALL</sequence>
<keyword id="KW-0997">Cell inner membrane</keyword>
<keyword id="KW-1003">Cell membrane</keyword>
<keyword id="KW-0169">Cobalamin biosynthesis</keyword>
<keyword id="KW-0460">Magnesium</keyword>
<keyword id="KW-0472">Membrane</keyword>
<keyword id="KW-1185">Reference proteome</keyword>
<keyword id="KW-0808">Transferase</keyword>
<keyword id="KW-0812">Transmembrane</keyword>
<keyword id="KW-1133">Transmembrane helix</keyword>
<name>COBS_ECO27</name>
<proteinExistence type="inferred from homology"/>
<dbReference type="EC" id="2.7.8.26" evidence="1"/>
<dbReference type="EMBL" id="FM180568">
    <property type="protein sequence ID" value="CAS09673.1"/>
    <property type="molecule type" value="Genomic_DNA"/>
</dbReference>
<dbReference type="RefSeq" id="WP_001339741.1">
    <property type="nucleotide sequence ID" value="NC_011601.1"/>
</dbReference>
<dbReference type="KEGG" id="ecg:E2348C_2125"/>
<dbReference type="HOGENOM" id="CLU_057426_1_1_6"/>
<dbReference type="UniPathway" id="UPA00148">
    <property type="reaction ID" value="UER00238"/>
</dbReference>
<dbReference type="Proteomes" id="UP000008205">
    <property type="component" value="Chromosome"/>
</dbReference>
<dbReference type="GO" id="GO:0005886">
    <property type="term" value="C:plasma membrane"/>
    <property type="evidence" value="ECO:0007669"/>
    <property type="project" value="UniProtKB-SubCell"/>
</dbReference>
<dbReference type="GO" id="GO:0051073">
    <property type="term" value="F:adenosylcobinamide-GDP ribazoletransferase activity"/>
    <property type="evidence" value="ECO:0007669"/>
    <property type="project" value="UniProtKB-UniRule"/>
</dbReference>
<dbReference type="GO" id="GO:0008818">
    <property type="term" value="F:cobalamin 5'-phosphate synthase activity"/>
    <property type="evidence" value="ECO:0007669"/>
    <property type="project" value="UniProtKB-UniRule"/>
</dbReference>
<dbReference type="GO" id="GO:0009236">
    <property type="term" value="P:cobalamin biosynthetic process"/>
    <property type="evidence" value="ECO:0007669"/>
    <property type="project" value="UniProtKB-UniRule"/>
</dbReference>
<dbReference type="HAMAP" id="MF_00719">
    <property type="entry name" value="CobS"/>
    <property type="match status" value="1"/>
</dbReference>
<dbReference type="InterPro" id="IPR003805">
    <property type="entry name" value="CobS"/>
</dbReference>
<dbReference type="NCBIfam" id="TIGR00317">
    <property type="entry name" value="cobS"/>
    <property type="match status" value="1"/>
</dbReference>
<dbReference type="PANTHER" id="PTHR34148">
    <property type="entry name" value="ADENOSYLCOBINAMIDE-GDP RIBAZOLETRANSFERASE"/>
    <property type="match status" value="1"/>
</dbReference>
<dbReference type="PANTHER" id="PTHR34148:SF1">
    <property type="entry name" value="ADENOSYLCOBINAMIDE-GDP RIBAZOLETRANSFERASE"/>
    <property type="match status" value="1"/>
</dbReference>
<dbReference type="Pfam" id="PF02654">
    <property type="entry name" value="CobS"/>
    <property type="match status" value="1"/>
</dbReference>
<protein>
    <recommendedName>
        <fullName evidence="1">Adenosylcobinamide-GDP ribazoletransferase</fullName>
        <ecNumber evidence="1">2.7.8.26</ecNumber>
    </recommendedName>
    <alternativeName>
        <fullName evidence="1">Cobalamin synthase</fullName>
    </alternativeName>
    <alternativeName>
        <fullName evidence="1">Cobalamin-5'-phosphate synthase</fullName>
    </alternativeName>
</protein>
<gene>
    <name evidence="1" type="primary">cobS</name>
    <name type="ordered locus">E2348C_2125</name>
</gene>